<protein>
    <recommendedName>
        <fullName evidence="1">Crossover junction endodeoxyribonuclease RuvC</fullName>
        <ecNumber evidence="1">3.1.21.10</ecNumber>
    </recommendedName>
    <alternativeName>
        <fullName evidence="1">Holliday junction nuclease RuvC</fullName>
    </alternativeName>
    <alternativeName>
        <fullName evidence="1">Holliday junction resolvase RuvC</fullName>
    </alternativeName>
</protein>
<comment type="function">
    <text evidence="1">The RuvA-RuvB-RuvC complex processes Holliday junction (HJ) DNA during genetic recombination and DNA repair. Endonuclease that resolves HJ intermediates. Cleaves cruciform DNA by making single-stranded nicks across the HJ at symmetrical positions within the homologous arms, yielding a 5'-phosphate and a 3'-hydroxyl group; requires a central core of homology in the junction. The consensus cleavage sequence is 5'-(A/T)TT(C/G)-3'. Cleavage occurs on the 3'-side of the TT dinucleotide at the point of strand exchange. HJ branch migration catalyzed by RuvA-RuvB allows RuvC to scan DNA until it finds its consensus sequence, where it cleaves and resolves the cruciform DNA.</text>
</comment>
<comment type="catalytic activity">
    <reaction evidence="1">
        <text>Endonucleolytic cleavage at a junction such as a reciprocal single-stranded crossover between two homologous DNA duplexes (Holliday junction).</text>
        <dbReference type="EC" id="3.1.21.10"/>
    </reaction>
</comment>
<comment type="cofactor">
    <cofactor evidence="1">
        <name>Mg(2+)</name>
        <dbReference type="ChEBI" id="CHEBI:18420"/>
    </cofactor>
    <text evidence="1">Binds 2 Mg(2+) ion per subunit.</text>
</comment>
<comment type="subunit">
    <text evidence="1">Homodimer which binds Holliday junction (HJ) DNA. The HJ becomes 2-fold symmetrical on binding to RuvC with unstacked arms; it has a different conformation from HJ DNA in complex with RuvA. In the full resolvosome a probable DNA-RuvA(4)-RuvB(12)-RuvC(2) complex forms which resolves the HJ.</text>
</comment>
<comment type="subcellular location">
    <subcellularLocation>
        <location evidence="1">Cytoplasm</location>
    </subcellularLocation>
</comment>
<comment type="similarity">
    <text evidence="1">Belongs to the RuvC family.</text>
</comment>
<feature type="chain" id="PRO_1000074490" description="Crossover junction endodeoxyribonuclease RuvC">
    <location>
        <begin position="1"/>
        <end position="164"/>
    </location>
</feature>
<feature type="active site" evidence="1">
    <location>
        <position position="7"/>
    </location>
</feature>
<feature type="active site" evidence="1">
    <location>
        <position position="67"/>
    </location>
</feature>
<feature type="active site" evidence="1">
    <location>
        <position position="140"/>
    </location>
</feature>
<feature type="binding site" evidence="1">
    <location>
        <position position="7"/>
    </location>
    <ligand>
        <name>Mg(2+)</name>
        <dbReference type="ChEBI" id="CHEBI:18420"/>
        <label>1</label>
    </ligand>
</feature>
<feature type="binding site" evidence="1">
    <location>
        <position position="67"/>
    </location>
    <ligand>
        <name>Mg(2+)</name>
        <dbReference type="ChEBI" id="CHEBI:18420"/>
        <label>2</label>
    </ligand>
</feature>
<feature type="binding site" evidence="1">
    <location>
        <position position="140"/>
    </location>
    <ligand>
        <name>Mg(2+)</name>
        <dbReference type="ChEBI" id="CHEBI:18420"/>
        <label>1</label>
    </ligand>
</feature>
<reference key="1">
    <citation type="journal article" date="2008" name="Genome Res.">
        <title>The genome of Pelotomaculum thermopropionicum reveals niche-associated evolution in anaerobic microbiota.</title>
        <authorList>
            <person name="Kosaka T."/>
            <person name="Kato S."/>
            <person name="Shimoyama T."/>
            <person name="Ishii S."/>
            <person name="Abe T."/>
            <person name="Watanabe K."/>
        </authorList>
    </citation>
    <scope>NUCLEOTIDE SEQUENCE [LARGE SCALE GENOMIC DNA]</scope>
    <source>
        <strain>DSM 13744 / JCM 10971 / SI</strain>
    </source>
</reference>
<name>RUVC_PELTS</name>
<sequence>MLIMGVDPGTAITGYGIVEYAGNRFALVECGCIRTMPGVPPAERLQALYGELVEIIKRHRPEHFAVEEIFFNKNTRTALTVGQARGVTVLAAAQSGLPVFEYTPLQVKQAVAGFGRAGKTQVQYMVKTILALPEVPAPDDVADALAVAICHAHHYTWERKLKLK</sequence>
<accession>A5D3F9</accession>
<organism>
    <name type="scientific">Pelotomaculum thermopropionicum (strain DSM 13744 / JCM 10971 / SI)</name>
    <dbReference type="NCBI Taxonomy" id="370438"/>
    <lineage>
        <taxon>Bacteria</taxon>
        <taxon>Bacillati</taxon>
        <taxon>Bacillota</taxon>
        <taxon>Clostridia</taxon>
        <taxon>Eubacteriales</taxon>
        <taxon>Desulfotomaculaceae</taxon>
        <taxon>Pelotomaculum</taxon>
    </lineage>
</organism>
<proteinExistence type="inferred from homology"/>
<gene>
    <name evidence="1" type="primary">ruvC</name>
    <name type="ordered locus">PTH_1025</name>
</gene>
<keyword id="KW-0963">Cytoplasm</keyword>
<keyword id="KW-0227">DNA damage</keyword>
<keyword id="KW-0233">DNA recombination</keyword>
<keyword id="KW-0234">DNA repair</keyword>
<keyword id="KW-0238">DNA-binding</keyword>
<keyword id="KW-0255">Endonuclease</keyword>
<keyword id="KW-0378">Hydrolase</keyword>
<keyword id="KW-0460">Magnesium</keyword>
<keyword id="KW-0479">Metal-binding</keyword>
<keyword id="KW-0540">Nuclease</keyword>
<keyword id="KW-1185">Reference proteome</keyword>
<evidence type="ECO:0000255" key="1">
    <source>
        <dbReference type="HAMAP-Rule" id="MF_00034"/>
    </source>
</evidence>
<dbReference type="EC" id="3.1.21.10" evidence="1"/>
<dbReference type="EMBL" id="AP009389">
    <property type="protein sequence ID" value="BAF59206.1"/>
    <property type="molecule type" value="Genomic_DNA"/>
</dbReference>
<dbReference type="SMR" id="A5D3F9"/>
<dbReference type="STRING" id="370438.PTH_1025"/>
<dbReference type="KEGG" id="pth:PTH_1025"/>
<dbReference type="eggNOG" id="COG0817">
    <property type="taxonomic scope" value="Bacteria"/>
</dbReference>
<dbReference type="HOGENOM" id="CLU_091257_3_1_9"/>
<dbReference type="Proteomes" id="UP000006556">
    <property type="component" value="Chromosome"/>
</dbReference>
<dbReference type="GO" id="GO:0005737">
    <property type="term" value="C:cytoplasm"/>
    <property type="evidence" value="ECO:0007669"/>
    <property type="project" value="UniProtKB-SubCell"/>
</dbReference>
<dbReference type="GO" id="GO:0048476">
    <property type="term" value="C:Holliday junction resolvase complex"/>
    <property type="evidence" value="ECO:0007669"/>
    <property type="project" value="UniProtKB-UniRule"/>
</dbReference>
<dbReference type="GO" id="GO:0008821">
    <property type="term" value="F:crossover junction DNA endonuclease activity"/>
    <property type="evidence" value="ECO:0007669"/>
    <property type="project" value="UniProtKB-UniRule"/>
</dbReference>
<dbReference type="GO" id="GO:0003677">
    <property type="term" value="F:DNA binding"/>
    <property type="evidence" value="ECO:0007669"/>
    <property type="project" value="UniProtKB-KW"/>
</dbReference>
<dbReference type="GO" id="GO:0000287">
    <property type="term" value="F:magnesium ion binding"/>
    <property type="evidence" value="ECO:0007669"/>
    <property type="project" value="UniProtKB-UniRule"/>
</dbReference>
<dbReference type="GO" id="GO:0006310">
    <property type="term" value="P:DNA recombination"/>
    <property type="evidence" value="ECO:0007669"/>
    <property type="project" value="UniProtKB-UniRule"/>
</dbReference>
<dbReference type="GO" id="GO:0006281">
    <property type="term" value="P:DNA repair"/>
    <property type="evidence" value="ECO:0007669"/>
    <property type="project" value="UniProtKB-UniRule"/>
</dbReference>
<dbReference type="CDD" id="cd16962">
    <property type="entry name" value="RuvC"/>
    <property type="match status" value="1"/>
</dbReference>
<dbReference type="FunFam" id="3.30.420.10:FF:000002">
    <property type="entry name" value="Crossover junction endodeoxyribonuclease RuvC"/>
    <property type="match status" value="1"/>
</dbReference>
<dbReference type="Gene3D" id="3.30.420.10">
    <property type="entry name" value="Ribonuclease H-like superfamily/Ribonuclease H"/>
    <property type="match status" value="1"/>
</dbReference>
<dbReference type="HAMAP" id="MF_00034">
    <property type="entry name" value="RuvC"/>
    <property type="match status" value="1"/>
</dbReference>
<dbReference type="InterPro" id="IPR012337">
    <property type="entry name" value="RNaseH-like_sf"/>
</dbReference>
<dbReference type="InterPro" id="IPR036397">
    <property type="entry name" value="RNaseH_sf"/>
</dbReference>
<dbReference type="InterPro" id="IPR020563">
    <property type="entry name" value="X-over_junc_endoDNase_Mg_BS"/>
</dbReference>
<dbReference type="InterPro" id="IPR002176">
    <property type="entry name" value="X-over_junc_endoDNase_RuvC"/>
</dbReference>
<dbReference type="NCBIfam" id="NF000711">
    <property type="entry name" value="PRK00039.2-1"/>
    <property type="match status" value="1"/>
</dbReference>
<dbReference type="NCBIfam" id="TIGR00228">
    <property type="entry name" value="ruvC"/>
    <property type="match status" value="1"/>
</dbReference>
<dbReference type="PANTHER" id="PTHR30194">
    <property type="entry name" value="CROSSOVER JUNCTION ENDODEOXYRIBONUCLEASE RUVC"/>
    <property type="match status" value="1"/>
</dbReference>
<dbReference type="PANTHER" id="PTHR30194:SF3">
    <property type="entry name" value="CROSSOVER JUNCTION ENDODEOXYRIBONUCLEASE RUVC"/>
    <property type="match status" value="1"/>
</dbReference>
<dbReference type="Pfam" id="PF02075">
    <property type="entry name" value="RuvC"/>
    <property type="match status" value="1"/>
</dbReference>
<dbReference type="PRINTS" id="PR00696">
    <property type="entry name" value="RSOLVASERUVC"/>
</dbReference>
<dbReference type="SUPFAM" id="SSF53098">
    <property type="entry name" value="Ribonuclease H-like"/>
    <property type="match status" value="1"/>
</dbReference>
<dbReference type="PROSITE" id="PS01321">
    <property type="entry name" value="RUVC"/>
    <property type="match status" value="1"/>
</dbReference>